<sequence length="207" mass="22153">MADILTQLQTCLDQLATQFYATIGYLSTYHDNSPAIPPPDVPDAAPALAKIPKNSTAPPVPAGAPVPALSQASPPAQNPAHGAAGAGTSVGEGAQTPGPAAGAGADPNLPAPDSPRTFASRQRELARDLIIKEQQIEYLISVLPGIDSSEAEQEKRIRELEGELRQVEEERELKMRELKRLRRTLENVLTAVETGLYGDRELLEKYA</sequence>
<accession>Q4X0I5</accession>
<feature type="chain" id="PRO_0000305957" description="Mediator of RNA polymerase II transcription subunit 21">
    <location>
        <begin position="1"/>
        <end position="207"/>
    </location>
</feature>
<feature type="region of interest" description="Disordered" evidence="3">
    <location>
        <begin position="36"/>
        <end position="120"/>
    </location>
</feature>
<feature type="coiled-coil region" evidence="2">
    <location>
        <begin position="146"/>
        <end position="194"/>
    </location>
</feature>
<feature type="compositionally biased region" description="Low complexity" evidence="3">
    <location>
        <begin position="91"/>
        <end position="108"/>
    </location>
</feature>
<protein>
    <recommendedName>
        <fullName>Mediator of RNA polymerase II transcription subunit 21</fullName>
    </recommendedName>
    <alternativeName>
        <fullName>Mediator complex subunit 21</fullName>
    </alternativeName>
</protein>
<gene>
    <name type="primary">srb7</name>
    <name type="synonym">med21</name>
    <name type="ORF">AFUA_2G13350</name>
</gene>
<organism>
    <name type="scientific">Aspergillus fumigatus (strain ATCC MYA-4609 / CBS 101355 / FGSC A1100 / Af293)</name>
    <name type="common">Neosartorya fumigata</name>
    <dbReference type="NCBI Taxonomy" id="330879"/>
    <lineage>
        <taxon>Eukaryota</taxon>
        <taxon>Fungi</taxon>
        <taxon>Dikarya</taxon>
        <taxon>Ascomycota</taxon>
        <taxon>Pezizomycotina</taxon>
        <taxon>Eurotiomycetes</taxon>
        <taxon>Eurotiomycetidae</taxon>
        <taxon>Eurotiales</taxon>
        <taxon>Aspergillaceae</taxon>
        <taxon>Aspergillus</taxon>
        <taxon>Aspergillus subgen. Fumigati</taxon>
    </lineage>
</organism>
<comment type="function">
    <text evidence="1">Component of the Mediator complex, a coactivator involved in the regulated transcription of nearly all RNA polymerase II-dependent genes. Mediator functions as a bridge to convey information from gene-specific regulatory proteins to the basal RNA polymerase II transcription machinery. Mediator is recruited to promoters by direct interactions with regulatory proteins and serves as a scaffold for the assembly of a functional preinitiation complex with RNA polymerase II and the general transcription factors (By similarity).</text>
</comment>
<comment type="subunit">
    <text evidence="1">Component of the Mediator complex.</text>
</comment>
<comment type="subcellular location">
    <subcellularLocation>
        <location evidence="1">Nucleus</location>
    </subcellularLocation>
</comment>
<comment type="similarity">
    <text evidence="4">Belongs to the Mediator complex subunit 21 family.</text>
</comment>
<name>MED21_ASPFU</name>
<proteinExistence type="inferred from homology"/>
<keyword id="KW-0010">Activator</keyword>
<keyword id="KW-0175">Coiled coil</keyword>
<keyword id="KW-0539">Nucleus</keyword>
<keyword id="KW-1185">Reference proteome</keyword>
<keyword id="KW-0804">Transcription</keyword>
<keyword id="KW-0805">Transcription regulation</keyword>
<dbReference type="EMBL" id="AAHF01000001">
    <property type="protein sequence ID" value="EAL93630.1"/>
    <property type="molecule type" value="Genomic_DNA"/>
</dbReference>
<dbReference type="RefSeq" id="XP_755668.1">
    <property type="nucleotide sequence ID" value="XM_750575.1"/>
</dbReference>
<dbReference type="SMR" id="Q4X0I5"/>
<dbReference type="FunCoup" id="Q4X0I5">
    <property type="interactions" value="264"/>
</dbReference>
<dbReference type="STRING" id="330879.Q4X0I5"/>
<dbReference type="EnsemblFungi" id="EAL93630">
    <property type="protein sequence ID" value="EAL93630"/>
    <property type="gene ID" value="AFUA_2G13350"/>
</dbReference>
<dbReference type="GeneID" id="3513170"/>
<dbReference type="KEGG" id="afm:AFUA_2G13350"/>
<dbReference type="VEuPathDB" id="FungiDB:Afu2g13350"/>
<dbReference type="eggNOG" id="KOG1510">
    <property type="taxonomic scope" value="Eukaryota"/>
</dbReference>
<dbReference type="HOGENOM" id="CLU_094271_0_1_1"/>
<dbReference type="InParanoid" id="Q4X0I5"/>
<dbReference type="OMA" id="LTTYHDH"/>
<dbReference type="OrthoDB" id="526653at2759"/>
<dbReference type="Proteomes" id="UP000002530">
    <property type="component" value="Chromosome 2"/>
</dbReference>
<dbReference type="GO" id="GO:0016592">
    <property type="term" value="C:mediator complex"/>
    <property type="evidence" value="ECO:0000318"/>
    <property type="project" value="GO_Central"/>
</dbReference>
<dbReference type="GO" id="GO:0003712">
    <property type="term" value="F:transcription coregulator activity"/>
    <property type="evidence" value="ECO:0000318"/>
    <property type="project" value="GO_Central"/>
</dbReference>
<dbReference type="GO" id="GO:0006357">
    <property type="term" value="P:regulation of transcription by RNA polymerase II"/>
    <property type="evidence" value="ECO:0000318"/>
    <property type="project" value="GO_Central"/>
</dbReference>
<dbReference type="Gene3D" id="6.10.280.10">
    <property type="entry name" value="Mediator complex, subunit Med21"/>
    <property type="match status" value="1"/>
</dbReference>
<dbReference type="InterPro" id="IPR037212">
    <property type="entry name" value="Med7/Med21-like"/>
</dbReference>
<dbReference type="InterPro" id="IPR021384">
    <property type="entry name" value="Mediator_Med21"/>
</dbReference>
<dbReference type="PANTHER" id="PTHR13381:SF0">
    <property type="entry name" value="MEDIATOR OF RNA POLYMERASE II TRANSCRIPTION SUBUNIT 21"/>
    <property type="match status" value="1"/>
</dbReference>
<dbReference type="PANTHER" id="PTHR13381">
    <property type="entry name" value="RNA POLYMERASE II HOLOENZYME COMPONENT SRB7"/>
    <property type="match status" value="1"/>
</dbReference>
<dbReference type="Pfam" id="PF11221">
    <property type="entry name" value="Med21"/>
    <property type="match status" value="1"/>
</dbReference>
<dbReference type="SUPFAM" id="SSF140718">
    <property type="entry name" value="Mediator hinge subcomplex-like"/>
    <property type="match status" value="1"/>
</dbReference>
<evidence type="ECO:0000250" key="1"/>
<evidence type="ECO:0000255" key="2"/>
<evidence type="ECO:0000256" key="3">
    <source>
        <dbReference type="SAM" id="MobiDB-lite"/>
    </source>
</evidence>
<evidence type="ECO:0000305" key="4"/>
<reference key="1">
    <citation type="journal article" date="2005" name="Nature">
        <title>Genomic sequence of the pathogenic and allergenic filamentous fungus Aspergillus fumigatus.</title>
        <authorList>
            <person name="Nierman W.C."/>
            <person name="Pain A."/>
            <person name="Anderson M.J."/>
            <person name="Wortman J.R."/>
            <person name="Kim H.S."/>
            <person name="Arroyo J."/>
            <person name="Berriman M."/>
            <person name="Abe K."/>
            <person name="Archer D.B."/>
            <person name="Bermejo C."/>
            <person name="Bennett J.W."/>
            <person name="Bowyer P."/>
            <person name="Chen D."/>
            <person name="Collins M."/>
            <person name="Coulsen R."/>
            <person name="Davies R."/>
            <person name="Dyer P.S."/>
            <person name="Farman M.L."/>
            <person name="Fedorova N."/>
            <person name="Fedorova N.D."/>
            <person name="Feldblyum T.V."/>
            <person name="Fischer R."/>
            <person name="Fosker N."/>
            <person name="Fraser A."/>
            <person name="Garcia J.L."/>
            <person name="Garcia M.J."/>
            <person name="Goble A."/>
            <person name="Goldman G.H."/>
            <person name="Gomi K."/>
            <person name="Griffith-Jones S."/>
            <person name="Gwilliam R."/>
            <person name="Haas B.J."/>
            <person name="Haas H."/>
            <person name="Harris D.E."/>
            <person name="Horiuchi H."/>
            <person name="Huang J."/>
            <person name="Humphray S."/>
            <person name="Jimenez J."/>
            <person name="Keller N."/>
            <person name="Khouri H."/>
            <person name="Kitamoto K."/>
            <person name="Kobayashi T."/>
            <person name="Konzack S."/>
            <person name="Kulkarni R."/>
            <person name="Kumagai T."/>
            <person name="Lafton A."/>
            <person name="Latge J.-P."/>
            <person name="Li W."/>
            <person name="Lord A."/>
            <person name="Lu C."/>
            <person name="Majoros W.H."/>
            <person name="May G.S."/>
            <person name="Miller B.L."/>
            <person name="Mohamoud Y."/>
            <person name="Molina M."/>
            <person name="Monod M."/>
            <person name="Mouyna I."/>
            <person name="Mulligan S."/>
            <person name="Murphy L.D."/>
            <person name="O'Neil S."/>
            <person name="Paulsen I."/>
            <person name="Penalva M.A."/>
            <person name="Pertea M."/>
            <person name="Price C."/>
            <person name="Pritchard B.L."/>
            <person name="Quail M.A."/>
            <person name="Rabbinowitsch E."/>
            <person name="Rawlins N."/>
            <person name="Rajandream M.A."/>
            <person name="Reichard U."/>
            <person name="Renauld H."/>
            <person name="Robson G.D."/>
            <person name="Rodriguez de Cordoba S."/>
            <person name="Rodriguez-Pena J.M."/>
            <person name="Ronning C.M."/>
            <person name="Rutter S."/>
            <person name="Salzberg S.L."/>
            <person name="Sanchez M."/>
            <person name="Sanchez-Ferrero J.C."/>
            <person name="Saunders D."/>
            <person name="Seeger K."/>
            <person name="Squares R."/>
            <person name="Squares S."/>
            <person name="Takeuchi M."/>
            <person name="Tekaia F."/>
            <person name="Turner G."/>
            <person name="Vazquez de Aldana C.R."/>
            <person name="Weidman J."/>
            <person name="White O."/>
            <person name="Woodward J.R."/>
            <person name="Yu J.-H."/>
            <person name="Fraser C.M."/>
            <person name="Galagan J.E."/>
            <person name="Asai K."/>
            <person name="Machida M."/>
            <person name="Hall N."/>
            <person name="Barrell B.G."/>
            <person name="Denning D.W."/>
        </authorList>
    </citation>
    <scope>NUCLEOTIDE SEQUENCE [LARGE SCALE GENOMIC DNA]</scope>
    <source>
        <strain>ATCC MYA-4609 / CBS 101355 / FGSC A1100 / Af293</strain>
    </source>
</reference>